<evidence type="ECO:0000255" key="1">
    <source>
        <dbReference type="HAMAP-Rule" id="MF_01454"/>
    </source>
</evidence>
<evidence type="ECO:0000255" key="2">
    <source>
        <dbReference type="PROSITE-ProRule" id="PRU01231"/>
    </source>
</evidence>
<evidence type="ECO:0000256" key="3">
    <source>
        <dbReference type="SAM" id="MobiDB-lite"/>
    </source>
</evidence>
<organism>
    <name type="scientific">Hydrogenovibrio crunogenus (strain DSM 25203 / XCL-2)</name>
    <name type="common">Thiomicrospira crunogena</name>
    <dbReference type="NCBI Taxonomy" id="317025"/>
    <lineage>
        <taxon>Bacteria</taxon>
        <taxon>Pseudomonadati</taxon>
        <taxon>Pseudomonadota</taxon>
        <taxon>Gammaproteobacteria</taxon>
        <taxon>Thiotrichales</taxon>
        <taxon>Piscirickettsiaceae</taxon>
        <taxon>Hydrogenovibrio</taxon>
    </lineage>
</organism>
<sequence>MQFVDEANIRVEAGRGGNGVASFRREKYIPFGGPNGGDGGDGGSIYLIADRNINTLIDFRYTRDYKAQNGQAGMGQQKTGRAGQDLIIPVPEGTIVRDLDTQEMIGDLVEHGQKLLVAQGGRHGLGNVHFKSSTNRTPRQCTPGEPGDERNLGLELSVLADVGLLGMPNAGKSSLITAVSAARPKVANYPFTTLYPNLGVVRVSPESSFVIADIPGLIEGASEGAGLGVQFLKHLSRTGLLLHVVDIAPMDGVDPVESVHVIEKELEKYSDALAGKERWLVLNKTDLLLEEEASELCDQIVERLNWTGPVFAISAVNRVGTDDLVKEVAYGLEQNRLKAQEESVEE</sequence>
<accession>Q31IT4</accession>
<proteinExistence type="inferred from homology"/>
<protein>
    <recommendedName>
        <fullName evidence="1">GTPase Obg</fullName>
        <ecNumber evidence="1">3.6.5.-</ecNumber>
    </recommendedName>
    <alternativeName>
        <fullName evidence="1">GTP-binding protein Obg</fullName>
    </alternativeName>
</protein>
<dbReference type="EC" id="3.6.5.-" evidence="1"/>
<dbReference type="EMBL" id="CP000109">
    <property type="protein sequence ID" value="ABB40939.1"/>
    <property type="molecule type" value="Genomic_DNA"/>
</dbReference>
<dbReference type="SMR" id="Q31IT4"/>
<dbReference type="STRING" id="317025.Tcr_0343"/>
<dbReference type="KEGG" id="tcx:Tcr_0343"/>
<dbReference type="eggNOG" id="COG0536">
    <property type="taxonomic scope" value="Bacteria"/>
</dbReference>
<dbReference type="HOGENOM" id="CLU_011747_2_0_6"/>
<dbReference type="OrthoDB" id="9807318at2"/>
<dbReference type="GO" id="GO:0005737">
    <property type="term" value="C:cytoplasm"/>
    <property type="evidence" value="ECO:0007669"/>
    <property type="project" value="UniProtKB-SubCell"/>
</dbReference>
<dbReference type="GO" id="GO:0005525">
    <property type="term" value="F:GTP binding"/>
    <property type="evidence" value="ECO:0007669"/>
    <property type="project" value="UniProtKB-UniRule"/>
</dbReference>
<dbReference type="GO" id="GO:0003924">
    <property type="term" value="F:GTPase activity"/>
    <property type="evidence" value="ECO:0007669"/>
    <property type="project" value="UniProtKB-UniRule"/>
</dbReference>
<dbReference type="GO" id="GO:0000287">
    <property type="term" value="F:magnesium ion binding"/>
    <property type="evidence" value="ECO:0007669"/>
    <property type="project" value="InterPro"/>
</dbReference>
<dbReference type="GO" id="GO:0042254">
    <property type="term" value="P:ribosome biogenesis"/>
    <property type="evidence" value="ECO:0007669"/>
    <property type="project" value="UniProtKB-UniRule"/>
</dbReference>
<dbReference type="CDD" id="cd01898">
    <property type="entry name" value="Obg"/>
    <property type="match status" value="1"/>
</dbReference>
<dbReference type="FunFam" id="2.70.210.12:FF:000001">
    <property type="entry name" value="GTPase Obg"/>
    <property type="match status" value="1"/>
</dbReference>
<dbReference type="Gene3D" id="2.70.210.12">
    <property type="entry name" value="GTP1/OBG domain"/>
    <property type="match status" value="1"/>
</dbReference>
<dbReference type="Gene3D" id="3.40.50.300">
    <property type="entry name" value="P-loop containing nucleotide triphosphate hydrolases"/>
    <property type="match status" value="1"/>
</dbReference>
<dbReference type="HAMAP" id="MF_01454">
    <property type="entry name" value="GTPase_Obg"/>
    <property type="match status" value="1"/>
</dbReference>
<dbReference type="InterPro" id="IPR031167">
    <property type="entry name" value="G_OBG"/>
</dbReference>
<dbReference type="InterPro" id="IPR006073">
    <property type="entry name" value="GTP-bd"/>
</dbReference>
<dbReference type="InterPro" id="IPR014100">
    <property type="entry name" value="GTP-bd_Obg/CgtA"/>
</dbReference>
<dbReference type="InterPro" id="IPR006074">
    <property type="entry name" value="GTP1-OBG_CS"/>
</dbReference>
<dbReference type="InterPro" id="IPR006169">
    <property type="entry name" value="GTP1_OBG_dom"/>
</dbReference>
<dbReference type="InterPro" id="IPR036726">
    <property type="entry name" value="GTP1_OBG_dom_sf"/>
</dbReference>
<dbReference type="InterPro" id="IPR045086">
    <property type="entry name" value="OBG_GTPase"/>
</dbReference>
<dbReference type="InterPro" id="IPR027417">
    <property type="entry name" value="P-loop_NTPase"/>
</dbReference>
<dbReference type="NCBIfam" id="TIGR02729">
    <property type="entry name" value="Obg_CgtA"/>
    <property type="match status" value="1"/>
</dbReference>
<dbReference type="NCBIfam" id="NF008954">
    <property type="entry name" value="PRK12296.1"/>
    <property type="match status" value="1"/>
</dbReference>
<dbReference type="NCBIfam" id="NF008955">
    <property type="entry name" value="PRK12297.1"/>
    <property type="match status" value="1"/>
</dbReference>
<dbReference type="NCBIfam" id="NF008956">
    <property type="entry name" value="PRK12299.1"/>
    <property type="match status" value="1"/>
</dbReference>
<dbReference type="PANTHER" id="PTHR11702">
    <property type="entry name" value="DEVELOPMENTALLY REGULATED GTP-BINDING PROTEIN-RELATED"/>
    <property type="match status" value="1"/>
</dbReference>
<dbReference type="PANTHER" id="PTHR11702:SF31">
    <property type="entry name" value="MITOCHONDRIAL RIBOSOME-ASSOCIATED GTPASE 2"/>
    <property type="match status" value="1"/>
</dbReference>
<dbReference type="Pfam" id="PF01018">
    <property type="entry name" value="GTP1_OBG"/>
    <property type="match status" value="1"/>
</dbReference>
<dbReference type="Pfam" id="PF01926">
    <property type="entry name" value="MMR_HSR1"/>
    <property type="match status" value="1"/>
</dbReference>
<dbReference type="PIRSF" id="PIRSF002401">
    <property type="entry name" value="GTP_bd_Obg/CgtA"/>
    <property type="match status" value="1"/>
</dbReference>
<dbReference type="PRINTS" id="PR00326">
    <property type="entry name" value="GTP1OBG"/>
</dbReference>
<dbReference type="SUPFAM" id="SSF82051">
    <property type="entry name" value="Obg GTP-binding protein N-terminal domain"/>
    <property type="match status" value="1"/>
</dbReference>
<dbReference type="SUPFAM" id="SSF52540">
    <property type="entry name" value="P-loop containing nucleoside triphosphate hydrolases"/>
    <property type="match status" value="1"/>
</dbReference>
<dbReference type="PROSITE" id="PS51710">
    <property type="entry name" value="G_OBG"/>
    <property type="match status" value="1"/>
</dbReference>
<dbReference type="PROSITE" id="PS00905">
    <property type="entry name" value="GTP1_OBG"/>
    <property type="match status" value="1"/>
</dbReference>
<dbReference type="PROSITE" id="PS51883">
    <property type="entry name" value="OBG"/>
    <property type="match status" value="1"/>
</dbReference>
<name>OBG_HYDCU</name>
<reference key="1">
    <citation type="journal article" date="2006" name="PLoS Biol.">
        <title>The genome of deep-sea vent chemolithoautotroph Thiomicrospira crunogena XCL-2.</title>
        <authorList>
            <person name="Scott K.M."/>
            <person name="Sievert S.M."/>
            <person name="Abril F.N."/>
            <person name="Ball L.A."/>
            <person name="Barrett C.J."/>
            <person name="Blake R.A."/>
            <person name="Boller A.J."/>
            <person name="Chain P.S.G."/>
            <person name="Clark J.A."/>
            <person name="Davis C.R."/>
            <person name="Detter C."/>
            <person name="Do K.F."/>
            <person name="Dobrinski K.P."/>
            <person name="Faza B.I."/>
            <person name="Fitzpatrick K.A."/>
            <person name="Freyermuth S.K."/>
            <person name="Harmer T.L."/>
            <person name="Hauser L.J."/>
            <person name="Huegler M."/>
            <person name="Kerfeld C.A."/>
            <person name="Klotz M.G."/>
            <person name="Kong W.W."/>
            <person name="Land M."/>
            <person name="Lapidus A."/>
            <person name="Larimer F.W."/>
            <person name="Longo D.L."/>
            <person name="Lucas S."/>
            <person name="Malfatti S.A."/>
            <person name="Massey S.E."/>
            <person name="Martin D.D."/>
            <person name="McCuddin Z."/>
            <person name="Meyer F."/>
            <person name="Moore J.L."/>
            <person name="Ocampo L.H. Jr."/>
            <person name="Paul J.H."/>
            <person name="Paulsen I.T."/>
            <person name="Reep D.K."/>
            <person name="Ren Q."/>
            <person name="Ross R.L."/>
            <person name="Sato P.Y."/>
            <person name="Thomas P."/>
            <person name="Tinkham L.E."/>
            <person name="Zeruth G.T."/>
        </authorList>
    </citation>
    <scope>NUCLEOTIDE SEQUENCE [LARGE SCALE GENOMIC DNA]</scope>
    <source>
        <strain>DSM 25203 / XCL-2</strain>
    </source>
</reference>
<comment type="function">
    <text evidence="1">An essential GTPase which binds GTP, GDP and possibly (p)ppGpp with moderate affinity, with high nucleotide exchange rates and a fairly low GTP hydrolysis rate. Plays a role in control of the cell cycle, stress response, ribosome biogenesis and in those bacteria that undergo differentiation, in morphogenesis control.</text>
</comment>
<comment type="cofactor">
    <cofactor evidence="1">
        <name>Mg(2+)</name>
        <dbReference type="ChEBI" id="CHEBI:18420"/>
    </cofactor>
</comment>
<comment type="subunit">
    <text evidence="1">Monomer.</text>
</comment>
<comment type="subcellular location">
    <subcellularLocation>
        <location evidence="1">Cytoplasm</location>
    </subcellularLocation>
</comment>
<comment type="similarity">
    <text evidence="1">Belongs to the TRAFAC class OBG-HflX-like GTPase superfamily. OBG GTPase family.</text>
</comment>
<gene>
    <name evidence="1" type="primary">obg</name>
    <name type="ordered locus">Tcr_0343</name>
</gene>
<feature type="chain" id="PRO_0000386364" description="GTPase Obg">
    <location>
        <begin position="1"/>
        <end position="346"/>
    </location>
</feature>
<feature type="domain" description="Obg" evidence="2">
    <location>
        <begin position="1"/>
        <end position="159"/>
    </location>
</feature>
<feature type="domain" description="OBG-type G" evidence="1">
    <location>
        <begin position="160"/>
        <end position="333"/>
    </location>
</feature>
<feature type="region of interest" description="Disordered" evidence="3">
    <location>
        <begin position="127"/>
        <end position="149"/>
    </location>
</feature>
<feature type="compositionally biased region" description="Polar residues" evidence="3">
    <location>
        <begin position="130"/>
        <end position="140"/>
    </location>
</feature>
<feature type="binding site" evidence="1">
    <location>
        <begin position="166"/>
        <end position="173"/>
    </location>
    <ligand>
        <name>GTP</name>
        <dbReference type="ChEBI" id="CHEBI:37565"/>
    </ligand>
</feature>
<feature type="binding site" evidence="1">
    <location>
        <position position="173"/>
    </location>
    <ligand>
        <name>Mg(2+)</name>
        <dbReference type="ChEBI" id="CHEBI:18420"/>
    </ligand>
</feature>
<feature type="binding site" evidence="1">
    <location>
        <begin position="191"/>
        <end position="195"/>
    </location>
    <ligand>
        <name>GTP</name>
        <dbReference type="ChEBI" id="CHEBI:37565"/>
    </ligand>
</feature>
<feature type="binding site" evidence="1">
    <location>
        <position position="193"/>
    </location>
    <ligand>
        <name>Mg(2+)</name>
        <dbReference type="ChEBI" id="CHEBI:18420"/>
    </ligand>
</feature>
<feature type="binding site" evidence="1">
    <location>
        <begin position="213"/>
        <end position="216"/>
    </location>
    <ligand>
        <name>GTP</name>
        <dbReference type="ChEBI" id="CHEBI:37565"/>
    </ligand>
</feature>
<feature type="binding site" evidence="1">
    <location>
        <begin position="283"/>
        <end position="286"/>
    </location>
    <ligand>
        <name>GTP</name>
        <dbReference type="ChEBI" id="CHEBI:37565"/>
    </ligand>
</feature>
<feature type="binding site" evidence="1">
    <location>
        <begin position="314"/>
        <end position="316"/>
    </location>
    <ligand>
        <name>GTP</name>
        <dbReference type="ChEBI" id="CHEBI:37565"/>
    </ligand>
</feature>
<keyword id="KW-0963">Cytoplasm</keyword>
<keyword id="KW-0342">GTP-binding</keyword>
<keyword id="KW-0378">Hydrolase</keyword>
<keyword id="KW-0460">Magnesium</keyword>
<keyword id="KW-0479">Metal-binding</keyword>
<keyword id="KW-0547">Nucleotide-binding</keyword>